<evidence type="ECO:0000255" key="1">
    <source>
        <dbReference type="HAMAP-Rule" id="MF_00362"/>
    </source>
</evidence>
<evidence type="ECO:0000305" key="2"/>
<keyword id="KW-1185">Reference proteome</keyword>
<keyword id="KW-0687">Ribonucleoprotein</keyword>
<keyword id="KW-0689">Ribosomal protein</keyword>
<keyword id="KW-0694">RNA-binding</keyword>
<keyword id="KW-0699">rRNA-binding</keyword>
<name>RL10_ACAM1</name>
<proteinExistence type="inferred from homology"/>
<sequence>MGRTLEDKKQIVAGLQENLSDTVMTIVIDYQGLTVAEITELRNKLRPAGAQCKITKNTLMRRAIKGDEKWEPLSDWLSDSSAFLLIKDDLGGAIKAYQAFQKATKKTELRGGVMDGQPLSKEDIKAIGDLPSQEVLVAQIAGAINSVTAKVAVGINEVPASLARALQAHSDSDKAA</sequence>
<reference key="1">
    <citation type="journal article" date="2008" name="Proc. Natl. Acad. Sci. U.S.A.">
        <title>Niche adaptation and genome expansion in the chlorophyll d-producing cyanobacterium Acaryochloris marina.</title>
        <authorList>
            <person name="Swingley W.D."/>
            <person name="Chen M."/>
            <person name="Cheung P.C."/>
            <person name="Conrad A.L."/>
            <person name="Dejesa L.C."/>
            <person name="Hao J."/>
            <person name="Honchak B.M."/>
            <person name="Karbach L.E."/>
            <person name="Kurdoglu A."/>
            <person name="Lahiri S."/>
            <person name="Mastrian S.D."/>
            <person name="Miyashita H."/>
            <person name="Page L."/>
            <person name="Ramakrishna P."/>
            <person name="Satoh S."/>
            <person name="Sattley W.M."/>
            <person name="Shimada Y."/>
            <person name="Taylor H.L."/>
            <person name="Tomo T."/>
            <person name="Tsuchiya T."/>
            <person name="Wang Z.T."/>
            <person name="Raymond J."/>
            <person name="Mimuro M."/>
            <person name="Blankenship R.E."/>
            <person name="Touchman J.W."/>
        </authorList>
    </citation>
    <scope>NUCLEOTIDE SEQUENCE [LARGE SCALE GENOMIC DNA]</scope>
    <source>
        <strain>MBIC 11017</strain>
    </source>
</reference>
<dbReference type="EMBL" id="CP000828">
    <property type="protein sequence ID" value="ABW27866.1"/>
    <property type="molecule type" value="Genomic_DNA"/>
</dbReference>
<dbReference type="RefSeq" id="WP_012163305.1">
    <property type="nucleotide sequence ID" value="NC_009925.1"/>
</dbReference>
<dbReference type="SMR" id="B0CAD1"/>
<dbReference type="STRING" id="329726.AM1_2867"/>
<dbReference type="KEGG" id="amr:AM1_2867"/>
<dbReference type="eggNOG" id="COG0244">
    <property type="taxonomic scope" value="Bacteria"/>
</dbReference>
<dbReference type="HOGENOM" id="CLU_092227_1_1_3"/>
<dbReference type="OrthoDB" id="9808307at2"/>
<dbReference type="Proteomes" id="UP000000268">
    <property type="component" value="Chromosome"/>
</dbReference>
<dbReference type="GO" id="GO:0015934">
    <property type="term" value="C:large ribosomal subunit"/>
    <property type="evidence" value="ECO:0007669"/>
    <property type="project" value="InterPro"/>
</dbReference>
<dbReference type="GO" id="GO:0070180">
    <property type="term" value="F:large ribosomal subunit rRNA binding"/>
    <property type="evidence" value="ECO:0007669"/>
    <property type="project" value="UniProtKB-UniRule"/>
</dbReference>
<dbReference type="GO" id="GO:0003735">
    <property type="term" value="F:structural constituent of ribosome"/>
    <property type="evidence" value="ECO:0007669"/>
    <property type="project" value="InterPro"/>
</dbReference>
<dbReference type="GO" id="GO:0006412">
    <property type="term" value="P:translation"/>
    <property type="evidence" value="ECO:0007669"/>
    <property type="project" value="UniProtKB-UniRule"/>
</dbReference>
<dbReference type="CDD" id="cd05797">
    <property type="entry name" value="Ribosomal_L10"/>
    <property type="match status" value="1"/>
</dbReference>
<dbReference type="Gene3D" id="3.30.70.1730">
    <property type="match status" value="1"/>
</dbReference>
<dbReference type="Gene3D" id="6.10.250.290">
    <property type="match status" value="1"/>
</dbReference>
<dbReference type="HAMAP" id="MF_00362">
    <property type="entry name" value="Ribosomal_uL10"/>
    <property type="match status" value="1"/>
</dbReference>
<dbReference type="InterPro" id="IPR001790">
    <property type="entry name" value="Ribosomal_uL10"/>
</dbReference>
<dbReference type="InterPro" id="IPR043141">
    <property type="entry name" value="Ribosomal_uL10-like_sf"/>
</dbReference>
<dbReference type="InterPro" id="IPR022973">
    <property type="entry name" value="Ribosomal_uL10_bac"/>
</dbReference>
<dbReference type="InterPro" id="IPR047865">
    <property type="entry name" value="Ribosomal_uL10_bac_type"/>
</dbReference>
<dbReference type="InterPro" id="IPR002363">
    <property type="entry name" value="Ribosomal_uL10_CS_bac"/>
</dbReference>
<dbReference type="NCBIfam" id="NF000955">
    <property type="entry name" value="PRK00099.1-1"/>
    <property type="match status" value="1"/>
</dbReference>
<dbReference type="PANTHER" id="PTHR11560">
    <property type="entry name" value="39S RIBOSOMAL PROTEIN L10, MITOCHONDRIAL"/>
    <property type="match status" value="1"/>
</dbReference>
<dbReference type="Pfam" id="PF00466">
    <property type="entry name" value="Ribosomal_L10"/>
    <property type="match status" value="1"/>
</dbReference>
<dbReference type="SUPFAM" id="SSF160369">
    <property type="entry name" value="Ribosomal protein L10-like"/>
    <property type="match status" value="1"/>
</dbReference>
<dbReference type="PROSITE" id="PS01109">
    <property type="entry name" value="RIBOSOMAL_L10"/>
    <property type="match status" value="1"/>
</dbReference>
<comment type="function">
    <text evidence="1">Forms part of the ribosomal stalk, playing a central role in the interaction of the ribosome with GTP-bound translation factors.</text>
</comment>
<comment type="subunit">
    <text evidence="1">Part of the ribosomal stalk of the 50S ribosomal subunit. The N-terminus interacts with L11 and the large rRNA to form the base of the stalk. The C-terminus forms an elongated spine to which L12 dimers bind in a sequential fashion forming a multimeric L10(L12)X complex.</text>
</comment>
<comment type="similarity">
    <text evidence="1">Belongs to the universal ribosomal protein uL10 family.</text>
</comment>
<feature type="chain" id="PRO_1000079529" description="Large ribosomal subunit protein uL10">
    <location>
        <begin position="1"/>
        <end position="176"/>
    </location>
</feature>
<organism>
    <name type="scientific">Acaryochloris marina (strain MBIC 11017)</name>
    <dbReference type="NCBI Taxonomy" id="329726"/>
    <lineage>
        <taxon>Bacteria</taxon>
        <taxon>Bacillati</taxon>
        <taxon>Cyanobacteriota</taxon>
        <taxon>Cyanophyceae</taxon>
        <taxon>Acaryochloridales</taxon>
        <taxon>Acaryochloridaceae</taxon>
        <taxon>Acaryochloris</taxon>
    </lineage>
</organism>
<protein>
    <recommendedName>
        <fullName evidence="1">Large ribosomal subunit protein uL10</fullName>
    </recommendedName>
    <alternativeName>
        <fullName evidence="2">50S ribosomal protein L10</fullName>
    </alternativeName>
</protein>
<gene>
    <name evidence="1" type="primary">rplJ</name>
    <name evidence="1" type="synonym">rpl10</name>
    <name type="ordered locus">AM1_2867</name>
</gene>
<accession>B0CAD1</accession>